<keyword id="KW-0067">ATP-binding</keyword>
<keyword id="KW-0963">Cytoplasm</keyword>
<keyword id="KW-0460">Magnesium</keyword>
<keyword id="KW-0479">Metal-binding</keyword>
<keyword id="KW-0547">Nucleotide-binding</keyword>
<keyword id="KW-0554">One-carbon metabolism</keyword>
<keyword id="KW-0630">Potassium</keyword>
<keyword id="KW-1185">Reference proteome</keyword>
<keyword id="KW-0808">Transferase</keyword>
<evidence type="ECO:0000255" key="1">
    <source>
        <dbReference type="HAMAP-Rule" id="MF_00086"/>
    </source>
</evidence>
<accession>Q4A5F4</accession>
<protein>
    <recommendedName>
        <fullName evidence="1">S-adenosylmethionine synthase</fullName>
        <shortName evidence="1">AdoMet synthase</shortName>
        <ecNumber evidence="1">2.5.1.6</ecNumber>
    </recommendedName>
    <alternativeName>
        <fullName evidence="1">MAT</fullName>
    </alternativeName>
    <alternativeName>
        <fullName evidence="1">Methionine adenosyltransferase</fullName>
    </alternativeName>
</protein>
<name>METK_MYCS5</name>
<reference key="1">
    <citation type="journal article" date="2005" name="J. Bacteriol.">
        <title>Swine and poultry pathogens: the complete genome sequences of two strains of Mycoplasma hyopneumoniae and a strain of Mycoplasma synoviae.</title>
        <authorList>
            <person name="Vasconcelos A.T.R."/>
            <person name="Ferreira H.B."/>
            <person name="Bizarro C.V."/>
            <person name="Bonatto S.L."/>
            <person name="Carvalho M.O."/>
            <person name="Pinto P.M."/>
            <person name="Almeida D.F."/>
            <person name="Almeida L.G.P."/>
            <person name="Almeida R."/>
            <person name="Alves-Junior L."/>
            <person name="Assuncao E.N."/>
            <person name="Azevedo V.A.C."/>
            <person name="Bogo M.R."/>
            <person name="Brigido M.M."/>
            <person name="Brocchi M."/>
            <person name="Burity H.A."/>
            <person name="Camargo A.A."/>
            <person name="Camargo S.S."/>
            <person name="Carepo M.S."/>
            <person name="Carraro D.M."/>
            <person name="de Mattos Cascardo J.C."/>
            <person name="Castro L.A."/>
            <person name="Cavalcanti G."/>
            <person name="Chemale G."/>
            <person name="Collevatti R.G."/>
            <person name="Cunha C.W."/>
            <person name="Dallagiovanna B."/>
            <person name="Dambros B.P."/>
            <person name="Dellagostin O.A."/>
            <person name="Falcao C."/>
            <person name="Fantinatti-Garboggini F."/>
            <person name="Felipe M.S.S."/>
            <person name="Fiorentin L."/>
            <person name="Franco G.R."/>
            <person name="Freitas N.S.A."/>
            <person name="Frias D."/>
            <person name="Grangeiro T.B."/>
            <person name="Grisard E.C."/>
            <person name="Guimaraes C.T."/>
            <person name="Hungria M."/>
            <person name="Jardim S.N."/>
            <person name="Krieger M.A."/>
            <person name="Laurino J.P."/>
            <person name="Lima L.F.A."/>
            <person name="Lopes M.I."/>
            <person name="Loreto E.L.S."/>
            <person name="Madeira H.M.F."/>
            <person name="Manfio G.P."/>
            <person name="Maranhao A.Q."/>
            <person name="Martinkovics C.T."/>
            <person name="Medeiros S.R.B."/>
            <person name="Moreira M.A.M."/>
            <person name="Neiva M."/>
            <person name="Ramalho-Neto C.E."/>
            <person name="Nicolas M.F."/>
            <person name="Oliveira S.C."/>
            <person name="Paixao R.F.C."/>
            <person name="Pedrosa F.O."/>
            <person name="Pena S.D.J."/>
            <person name="Pereira M."/>
            <person name="Pereira-Ferrari L."/>
            <person name="Piffer I."/>
            <person name="Pinto L.S."/>
            <person name="Potrich D.P."/>
            <person name="Salim A.C.M."/>
            <person name="Santos F.R."/>
            <person name="Schmitt R."/>
            <person name="Schneider M.P.C."/>
            <person name="Schrank A."/>
            <person name="Schrank I.S."/>
            <person name="Schuck A.F."/>
            <person name="Seuanez H.N."/>
            <person name="Silva D.W."/>
            <person name="Silva R."/>
            <person name="Silva S.C."/>
            <person name="Soares C.M.A."/>
            <person name="Souza K.R.L."/>
            <person name="Souza R.C."/>
            <person name="Staats C.C."/>
            <person name="Steffens M.B.R."/>
            <person name="Teixeira S.M.R."/>
            <person name="Urmenyi T.P."/>
            <person name="Vainstein M.H."/>
            <person name="Zuccherato L.W."/>
            <person name="Simpson A.J.G."/>
            <person name="Zaha A."/>
        </authorList>
    </citation>
    <scope>NUCLEOTIDE SEQUENCE [LARGE SCALE GENOMIC DNA]</scope>
    <source>
        <strain>53</strain>
    </source>
</reference>
<proteinExistence type="inferred from homology"/>
<dbReference type="EC" id="2.5.1.6" evidence="1"/>
<dbReference type="EMBL" id="AE017245">
    <property type="protein sequence ID" value="AAZ44017.1"/>
    <property type="molecule type" value="Genomic_DNA"/>
</dbReference>
<dbReference type="RefSeq" id="WP_011283746.1">
    <property type="nucleotide sequence ID" value="NC_007294.1"/>
</dbReference>
<dbReference type="SMR" id="Q4A5F4"/>
<dbReference type="STRING" id="262723.MS53_0610"/>
<dbReference type="KEGG" id="msy:MS53_0610"/>
<dbReference type="eggNOG" id="COG0192">
    <property type="taxonomic scope" value="Bacteria"/>
</dbReference>
<dbReference type="HOGENOM" id="CLU_041802_1_1_14"/>
<dbReference type="OrthoDB" id="9801686at2"/>
<dbReference type="UniPathway" id="UPA00315">
    <property type="reaction ID" value="UER00080"/>
</dbReference>
<dbReference type="Proteomes" id="UP000000549">
    <property type="component" value="Chromosome"/>
</dbReference>
<dbReference type="GO" id="GO:0005737">
    <property type="term" value="C:cytoplasm"/>
    <property type="evidence" value="ECO:0007669"/>
    <property type="project" value="UniProtKB-SubCell"/>
</dbReference>
<dbReference type="GO" id="GO:0005524">
    <property type="term" value="F:ATP binding"/>
    <property type="evidence" value="ECO:0007669"/>
    <property type="project" value="UniProtKB-UniRule"/>
</dbReference>
<dbReference type="GO" id="GO:0000287">
    <property type="term" value="F:magnesium ion binding"/>
    <property type="evidence" value="ECO:0007669"/>
    <property type="project" value="UniProtKB-UniRule"/>
</dbReference>
<dbReference type="GO" id="GO:0004478">
    <property type="term" value="F:methionine adenosyltransferase activity"/>
    <property type="evidence" value="ECO:0007669"/>
    <property type="project" value="UniProtKB-UniRule"/>
</dbReference>
<dbReference type="GO" id="GO:0006730">
    <property type="term" value="P:one-carbon metabolic process"/>
    <property type="evidence" value="ECO:0007669"/>
    <property type="project" value="UniProtKB-KW"/>
</dbReference>
<dbReference type="GO" id="GO:0006556">
    <property type="term" value="P:S-adenosylmethionine biosynthetic process"/>
    <property type="evidence" value="ECO:0007669"/>
    <property type="project" value="UniProtKB-UniRule"/>
</dbReference>
<dbReference type="CDD" id="cd18079">
    <property type="entry name" value="S-AdoMet_synt"/>
    <property type="match status" value="1"/>
</dbReference>
<dbReference type="Gene3D" id="3.30.300.10">
    <property type="match status" value="3"/>
</dbReference>
<dbReference type="HAMAP" id="MF_00086">
    <property type="entry name" value="S_AdoMet_synth1"/>
    <property type="match status" value="1"/>
</dbReference>
<dbReference type="InterPro" id="IPR022631">
    <property type="entry name" value="ADOMET_SYNTHASE_CS"/>
</dbReference>
<dbReference type="InterPro" id="IPR022630">
    <property type="entry name" value="S-AdoMet_synt_C"/>
</dbReference>
<dbReference type="InterPro" id="IPR022629">
    <property type="entry name" value="S-AdoMet_synt_central"/>
</dbReference>
<dbReference type="InterPro" id="IPR022628">
    <property type="entry name" value="S-AdoMet_synt_N"/>
</dbReference>
<dbReference type="InterPro" id="IPR002133">
    <property type="entry name" value="S-AdoMet_synthetase"/>
</dbReference>
<dbReference type="InterPro" id="IPR022636">
    <property type="entry name" value="S-AdoMet_synthetase_sfam"/>
</dbReference>
<dbReference type="NCBIfam" id="TIGR01034">
    <property type="entry name" value="metK"/>
    <property type="match status" value="1"/>
</dbReference>
<dbReference type="PANTHER" id="PTHR11964">
    <property type="entry name" value="S-ADENOSYLMETHIONINE SYNTHETASE"/>
    <property type="match status" value="1"/>
</dbReference>
<dbReference type="Pfam" id="PF02773">
    <property type="entry name" value="S-AdoMet_synt_C"/>
    <property type="match status" value="1"/>
</dbReference>
<dbReference type="Pfam" id="PF02772">
    <property type="entry name" value="S-AdoMet_synt_M"/>
    <property type="match status" value="1"/>
</dbReference>
<dbReference type="Pfam" id="PF00438">
    <property type="entry name" value="S-AdoMet_synt_N"/>
    <property type="match status" value="1"/>
</dbReference>
<dbReference type="PIRSF" id="PIRSF000497">
    <property type="entry name" value="MAT"/>
    <property type="match status" value="1"/>
</dbReference>
<dbReference type="SUPFAM" id="SSF55973">
    <property type="entry name" value="S-adenosylmethionine synthetase"/>
    <property type="match status" value="3"/>
</dbReference>
<dbReference type="PROSITE" id="PS00376">
    <property type="entry name" value="ADOMET_SYNTHASE_1"/>
    <property type="match status" value="1"/>
</dbReference>
<dbReference type="PROSITE" id="PS00377">
    <property type="entry name" value="ADOMET_SYNTHASE_2"/>
    <property type="match status" value="1"/>
</dbReference>
<gene>
    <name evidence="1" type="primary">metK</name>
    <name type="ordered locus">MS53_0610</name>
</gene>
<organism>
    <name type="scientific">Mycoplasmopsis synoviae (strain 53)</name>
    <name type="common">Mycoplasma synoviae</name>
    <dbReference type="NCBI Taxonomy" id="262723"/>
    <lineage>
        <taxon>Bacteria</taxon>
        <taxon>Bacillati</taxon>
        <taxon>Mycoplasmatota</taxon>
        <taxon>Mycoplasmoidales</taxon>
        <taxon>Metamycoplasmataceae</taxon>
        <taxon>Mycoplasmopsis</taxon>
    </lineage>
</organism>
<feature type="chain" id="PRO_0000241007" description="S-adenosylmethionine synthase">
    <location>
        <begin position="1"/>
        <end position="382"/>
    </location>
</feature>
<feature type="region of interest" description="Flexible loop" evidence="1">
    <location>
        <begin position="91"/>
        <end position="101"/>
    </location>
</feature>
<feature type="binding site" description="in other chain" evidence="1">
    <location>
        <position position="14"/>
    </location>
    <ligand>
        <name>ATP</name>
        <dbReference type="ChEBI" id="CHEBI:30616"/>
        <note>ligand shared between two neighboring subunits</note>
    </ligand>
</feature>
<feature type="binding site" evidence="1">
    <location>
        <position position="16"/>
    </location>
    <ligand>
        <name>Mg(2+)</name>
        <dbReference type="ChEBI" id="CHEBI:18420"/>
    </ligand>
</feature>
<feature type="binding site" evidence="1">
    <location>
        <position position="42"/>
    </location>
    <ligand>
        <name>K(+)</name>
        <dbReference type="ChEBI" id="CHEBI:29103"/>
    </ligand>
</feature>
<feature type="binding site" description="in other chain" evidence="1">
    <location>
        <position position="55"/>
    </location>
    <ligand>
        <name>L-methionine</name>
        <dbReference type="ChEBI" id="CHEBI:57844"/>
        <note>ligand shared between two neighboring subunits</note>
    </ligand>
</feature>
<feature type="binding site" description="in other chain" evidence="1">
    <location>
        <position position="91"/>
    </location>
    <ligand>
        <name>L-methionine</name>
        <dbReference type="ChEBI" id="CHEBI:57844"/>
        <note>ligand shared between two neighboring subunits</note>
    </ligand>
</feature>
<feature type="binding site" description="in other chain" evidence="1">
    <location>
        <begin position="156"/>
        <end position="158"/>
    </location>
    <ligand>
        <name>ATP</name>
        <dbReference type="ChEBI" id="CHEBI:30616"/>
        <note>ligand shared between two neighboring subunits</note>
    </ligand>
</feature>
<feature type="binding site" description="in other chain" evidence="1">
    <location>
        <begin position="222"/>
        <end position="223"/>
    </location>
    <ligand>
        <name>ATP</name>
        <dbReference type="ChEBI" id="CHEBI:30616"/>
        <note>ligand shared between two neighboring subunits</note>
    </ligand>
</feature>
<feature type="binding site" evidence="1">
    <location>
        <position position="231"/>
    </location>
    <ligand>
        <name>ATP</name>
        <dbReference type="ChEBI" id="CHEBI:30616"/>
        <note>ligand shared between two neighboring subunits</note>
    </ligand>
</feature>
<feature type="binding site" evidence="1">
    <location>
        <position position="231"/>
    </location>
    <ligand>
        <name>L-methionine</name>
        <dbReference type="ChEBI" id="CHEBI:57844"/>
        <note>ligand shared between two neighboring subunits</note>
    </ligand>
</feature>
<feature type="binding site" description="in other chain" evidence="1">
    <location>
        <begin position="237"/>
        <end position="238"/>
    </location>
    <ligand>
        <name>ATP</name>
        <dbReference type="ChEBI" id="CHEBI:30616"/>
        <note>ligand shared between two neighboring subunits</note>
    </ligand>
</feature>
<feature type="binding site" evidence="1">
    <location>
        <position position="254"/>
    </location>
    <ligand>
        <name>ATP</name>
        <dbReference type="ChEBI" id="CHEBI:30616"/>
        <note>ligand shared between two neighboring subunits</note>
    </ligand>
</feature>
<feature type="binding site" evidence="1">
    <location>
        <position position="258"/>
    </location>
    <ligand>
        <name>ATP</name>
        <dbReference type="ChEBI" id="CHEBI:30616"/>
        <note>ligand shared between two neighboring subunits</note>
    </ligand>
</feature>
<feature type="binding site" description="in other chain" evidence="1">
    <location>
        <position position="262"/>
    </location>
    <ligand>
        <name>L-methionine</name>
        <dbReference type="ChEBI" id="CHEBI:57844"/>
        <note>ligand shared between two neighboring subunits</note>
    </ligand>
</feature>
<sequence>MKKLFTSESVGRGHPDKICDQISDAILDAYLTWDPHSKVAVETMVSGNNVFIAGEVKSKVTVDVIEIAKNVLRNIGYYSNNTSFITDIKSQSENIAMGVNLQDSDDLGAGDQGFMFGYATNETSQYMPLGITLCNKIVSRAGMLIKNQEFKDAKEDMKTQVTLDYSDPQNVKVDTIIFSCHHNEKYNETKFKNYIKTQILKPVLDEFNLELPERILINPTGKFVIGGPFSDTGLTGRKIIVDTYGGSARHGGGAFSGKDATKLDRSGAYMARWIAKNLVAANIADKIEVQIAYSIGVAKPVSVMVNTFGENKVPEDVVLDAILNNFELTPKGIIKSLNLNKPIYQKSSVYGHFGREDFQFTWESLDKVEAIREFVISKGFNI</sequence>
<comment type="function">
    <text evidence="1">Catalyzes the formation of S-adenosylmethionine (AdoMet) from methionine and ATP. The overall synthetic reaction is composed of two sequential steps, AdoMet formation and the subsequent tripolyphosphate hydrolysis which occurs prior to release of AdoMet from the enzyme.</text>
</comment>
<comment type="catalytic activity">
    <reaction evidence="1">
        <text>L-methionine + ATP + H2O = S-adenosyl-L-methionine + phosphate + diphosphate</text>
        <dbReference type="Rhea" id="RHEA:21080"/>
        <dbReference type="ChEBI" id="CHEBI:15377"/>
        <dbReference type="ChEBI" id="CHEBI:30616"/>
        <dbReference type="ChEBI" id="CHEBI:33019"/>
        <dbReference type="ChEBI" id="CHEBI:43474"/>
        <dbReference type="ChEBI" id="CHEBI:57844"/>
        <dbReference type="ChEBI" id="CHEBI:59789"/>
        <dbReference type="EC" id="2.5.1.6"/>
    </reaction>
</comment>
<comment type="cofactor">
    <cofactor evidence="1">
        <name>Mg(2+)</name>
        <dbReference type="ChEBI" id="CHEBI:18420"/>
    </cofactor>
    <text evidence="1">Binds 2 divalent ions per subunit.</text>
</comment>
<comment type="cofactor">
    <cofactor evidence="1">
        <name>K(+)</name>
        <dbReference type="ChEBI" id="CHEBI:29103"/>
    </cofactor>
    <text evidence="1">Binds 1 potassium ion per subunit.</text>
</comment>
<comment type="pathway">
    <text evidence="1">Amino-acid biosynthesis; S-adenosyl-L-methionine biosynthesis; S-adenosyl-L-methionine from L-methionine: step 1/1.</text>
</comment>
<comment type="subunit">
    <text evidence="1">Homotetramer; dimer of dimers.</text>
</comment>
<comment type="subcellular location">
    <subcellularLocation>
        <location evidence="1">Cytoplasm</location>
    </subcellularLocation>
</comment>
<comment type="similarity">
    <text evidence="1">Belongs to the AdoMet synthase family.</text>
</comment>